<gene>
    <name evidence="1" type="primary">rsmA</name>
    <name evidence="1" type="synonym">ksgA</name>
    <name type="ordered locus">STER_1772</name>
</gene>
<dbReference type="EC" id="2.1.1.182" evidence="1"/>
<dbReference type="EMBL" id="CP000419">
    <property type="protein sequence ID" value="ABJ66910.1"/>
    <property type="molecule type" value="Genomic_DNA"/>
</dbReference>
<dbReference type="RefSeq" id="WP_011681654.1">
    <property type="nucleotide sequence ID" value="NC_008532.1"/>
</dbReference>
<dbReference type="SMR" id="Q03IR2"/>
<dbReference type="KEGG" id="ste:STER_1772"/>
<dbReference type="HOGENOM" id="CLU_041220_0_0_9"/>
<dbReference type="GO" id="GO:0005829">
    <property type="term" value="C:cytosol"/>
    <property type="evidence" value="ECO:0007669"/>
    <property type="project" value="TreeGrafter"/>
</dbReference>
<dbReference type="GO" id="GO:0052908">
    <property type="term" value="F:16S rRNA (adenine(1518)-N(6)/adenine(1519)-N(6))-dimethyltransferase activity"/>
    <property type="evidence" value="ECO:0007669"/>
    <property type="project" value="UniProtKB-EC"/>
</dbReference>
<dbReference type="GO" id="GO:0003723">
    <property type="term" value="F:RNA binding"/>
    <property type="evidence" value="ECO:0007669"/>
    <property type="project" value="UniProtKB-KW"/>
</dbReference>
<dbReference type="CDD" id="cd02440">
    <property type="entry name" value="AdoMet_MTases"/>
    <property type="match status" value="1"/>
</dbReference>
<dbReference type="FunFam" id="3.40.50.150:FF:000023">
    <property type="entry name" value="Ribosomal RNA small subunit methyltransferase A"/>
    <property type="match status" value="1"/>
</dbReference>
<dbReference type="Gene3D" id="1.10.8.100">
    <property type="entry name" value="Ribosomal RNA adenine dimethylase-like, domain 2"/>
    <property type="match status" value="1"/>
</dbReference>
<dbReference type="Gene3D" id="3.40.50.150">
    <property type="entry name" value="Vaccinia Virus protein VP39"/>
    <property type="match status" value="1"/>
</dbReference>
<dbReference type="HAMAP" id="MF_00607">
    <property type="entry name" value="16SrRNA_methyltr_A"/>
    <property type="match status" value="1"/>
</dbReference>
<dbReference type="InterPro" id="IPR001737">
    <property type="entry name" value="KsgA/Erm"/>
</dbReference>
<dbReference type="InterPro" id="IPR023165">
    <property type="entry name" value="rRNA_Ade_diMease-like_C"/>
</dbReference>
<dbReference type="InterPro" id="IPR020596">
    <property type="entry name" value="rRNA_Ade_Mease_Trfase_CS"/>
</dbReference>
<dbReference type="InterPro" id="IPR020598">
    <property type="entry name" value="rRNA_Ade_methylase_Trfase_N"/>
</dbReference>
<dbReference type="InterPro" id="IPR011530">
    <property type="entry name" value="rRNA_adenine_dimethylase"/>
</dbReference>
<dbReference type="InterPro" id="IPR029063">
    <property type="entry name" value="SAM-dependent_MTases_sf"/>
</dbReference>
<dbReference type="NCBIfam" id="TIGR00755">
    <property type="entry name" value="ksgA"/>
    <property type="match status" value="1"/>
</dbReference>
<dbReference type="PANTHER" id="PTHR11727">
    <property type="entry name" value="DIMETHYLADENOSINE TRANSFERASE"/>
    <property type="match status" value="1"/>
</dbReference>
<dbReference type="PANTHER" id="PTHR11727:SF7">
    <property type="entry name" value="DIMETHYLADENOSINE TRANSFERASE-RELATED"/>
    <property type="match status" value="1"/>
</dbReference>
<dbReference type="Pfam" id="PF00398">
    <property type="entry name" value="RrnaAD"/>
    <property type="match status" value="1"/>
</dbReference>
<dbReference type="SMART" id="SM00650">
    <property type="entry name" value="rADc"/>
    <property type="match status" value="1"/>
</dbReference>
<dbReference type="SUPFAM" id="SSF53335">
    <property type="entry name" value="S-adenosyl-L-methionine-dependent methyltransferases"/>
    <property type="match status" value="1"/>
</dbReference>
<dbReference type="PROSITE" id="PS01131">
    <property type="entry name" value="RRNA_A_DIMETH"/>
    <property type="match status" value="1"/>
</dbReference>
<dbReference type="PROSITE" id="PS51689">
    <property type="entry name" value="SAM_RNA_A_N6_MT"/>
    <property type="match status" value="1"/>
</dbReference>
<accession>Q03IR2</accession>
<name>RSMA_STRTD</name>
<evidence type="ECO:0000255" key="1">
    <source>
        <dbReference type="HAMAP-Rule" id="MF_00607"/>
    </source>
</evidence>
<sequence>MRIADYSVTKAVLERHGFTFKKSFGQNFLTDTNILQKIVNTAEINKNVNVIEIGPGIGALTEFLAENASEVMAFEIDERLVPILEDTLRDHDNVKVINEDVLKADLQTRVKEFENPDLPIKVVANLPYYITTPILMHLIESKIPFSEFVVMMQKEVADRISAEPNTKAYGSLSIAVQYYMTTKVAFAVPRTVFVPAPNVDSAILKMTRRKQPLVEVKDEDFFFRVSKASFLHRRKTLWNNLTSHFGKSEEVKNKLDQALENAAIKPSIRGEALSISDFARLSDALREAGL</sequence>
<comment type="function">
    <text evidence="1">Specifically dimethylates two adjacent adenosines (A1518 and A1519) in the loop of a conserved hairpin near the 3'-end of 16S rRNA in the 30S particle. May play a critical role in biogenesis of 30S subunits.</text>
</comment>
<comment type="catalytic activity">
    <reaction evidence="1">
        <text>adenosine(1518)/adenosine(1519) in 16S rRNA + 4 S-adenosyl-L-methionine = N(6)-dimethyladenosine(1518)/N(6)-dimethyladenosine(1519) in 16S rRNA + 4 S-adenosyl-L-homocysteine + 4 H(+)</text>
        <dbReference type="Rhea" id="RHEA:19609"/>
        <dbReference type="Rhea" id="RHEA-COMP:10232"/>
        <dbReference type="Rhea" id="RHEA-COMP:10233"/>
        <dbReference type="ChEBI" id="CHEBI:15378"/>
        <dbReference type="ChEBI" id="CHEBI:57856"/>
        <dbReference type="ChEBI" id="CHEBI:59789"/>
        <dbReference type="ChEBI" id="CHEBI:74411"/>
        <dbReference type="ChEBI" id="CHEBI:74493"/>
        <dbReference type="EC" id="2.1.1.182"/>
    </reaction>
</comment>
<comment type="subcellular location">
    <subcellularLocation>
        <location evidence="1">Cytoplasm</location>
    </subcellularLocation>
</comment>
<comment type="similarity">
    <text evidence="1">Belongs to the class I-like SAM-binding methyltransferase superfamily. rRNA adenine N(6)-methyltransferase family. RsmA subfamily.</text>
</comment>
<keyword id="KW-0963">Cytoplasm</keyword>
<keyword id="KW-0489">Methyltransferase</keyword>
<keyword id="KW-0694">RNA-binding</keyword>
<keyword id="KW-0698">rRNA processing</keyword>
<keyword id="KW-0949">S-adenosyl-L-methionine</keyword>
<keyword id="KW-0808">Transferase</keyword>
<organism>
    <name type="scientific">Streptococcus thermophilus (strain ATCC BAA-491 / LMD-9)</name>
    <dbReference type="NCBI Taxonomy" id="322159"/>
    <lineage>
        <taxon>Bacteria</taxon>
        <taxon>Bacillati</taxon>
        <taxon>Bacillota</taxon>
        <taxon>Bacilli</taxon>
        <taxon>Lactobacillales</taxon>
        <taxon>Streptococcaceae</taxon>
        <taxon>Streptococcus</taxon>
    </lineage>
</organism>
<proteinExistence type="inferred from homology"/>
<feature type="chain" id="PRO_1000056682" description="Ribosomal RNA small subunit methyltransferase A">
    <location>
        <begin position="1"/>
        <end position="290"/>
    </location>
</feature>
<feature type="binding site" evidence="1">
    <location>
        <position position="27"/>
    </location>
    <ligand>
        <name>S-adenosyl-L-methionine</name>
        <dbReference type="ChEBI" id="CHEBI:59789"/>
    </ligand>
</feature>
<feature type="binding site" evidence="1">
    <location>
        <position position="29"/>
    </location>
    <ligand>
        <name>S-adenosyl-L-methionine</name>
        <dbReference type="ChEBI" id="CHEBI:59789"/>
    </ligand>
</feature>
<feature type="binding site" evidence="1">
    <location>
        <position position="54"/>
    </location>
    <ligand>
        <name>S-adenosyl-L-methionine</name>
        <dbReference type="ChEBI" id="CHEBI:59789"/>
    </ligand>
</feature>
<feature type="binding site" evidence="1">
    <location>
        <position position="75"/>
    </location>
    <ligand>
        <name>S-adenosyl-L-methionine</name>
        <dbReference type="ChEBI" id="CHEBI:59789"/>
    </ligand>
</feature>
<feature type="binding site" evidence="1">
    <location>
        <position position="100"/>
    </location>
    <ligand>
        <name>S-adenosyl-L-methionine</name>
        <dbReference type="ChEBI" id="CHEBI:59789"/>
    </ligand>
</feature>
<feature type="binding site" evidence="1">
    <location>
        <position position="125"/>
    </location>
    <ligand>
        <name>S-adenosyl-L-methionine</name>
        <dbReference type="ChEBI" id="CHEBI:59789"/>
    </ligand>
</feature>
<reference key="1">
    <citation type="journal article" date="2006" name="Proc. Natl. Acad. Sci. U.S.A.">
        <title>Comparative genomics of the lactic acid bacteria.</title>
        <authorList>
            <person name="Makarova K.S."/>
            <person name="Slesarev A."/>
            <person name="Wolf Y.I."/>
            <person name="Sorokin A."/>
            <person name="Mirkin B."/>
            <person name="Koonin E.V."/>
            <person name="Pavlov A."/>
            <person name="Pavlova N."/>
            <person name="Karamychev V."/>
            <person name="Polouchine N."/>
            <person name="Shakhova V."/>
            <person name="Grigoriev I."/>
            <person name="Lou Y."/>
            <person name="Rohksar D."/>
            <person name="Lucas S."/>
            <person name="Huang K."/>
            <person name="Goodstein D.M."/>
            <person name="Hawkins T."/>
            <person name="Plengvidhya V."/>
            <person name="Welker D."/>
            <person name="Hughes J."/>
            <person name="Goh Y."/>
            <person name="Benson A."/>
            <person name="Baldwin K."/>
            <person name="Lee J.-H."/>
            <person name="Diaz-Muniz I."/>
            <person name="Dosti B."/>
            <person name="Smeianov V."/>
            <person name="Wechter W."/>
            <person name="Barabote R."/>
            <person name="Lorca G."/>
            <person name="Altermann E."/>
            <person name="Barrangou R."/>
            <person name="Ganesan B."/>
            <person name="Xie Y."/>
            <person name="Rawsthorne H."/>
            <person name="Tamir D."/>
            <person name="Parker C."/>
            <person name="Breidt F."/>
            <person name="Broadbent J.R."/>
            <person name="Hutkins R."/>
            <person name="O'Sullivan D."/>
            <person name="Steele J."/>
            <person name="Unlu G."/>
            <person name="Saier M.H. Jr."/>
            <person name="Klaenhammer T."/>
            <person name="Richardson P."/>
            <person name="Kozyavkin S."/>
            <person name="Weimer B.C."/>
            <person name="Mills D.A."/>
        </authorList>
    </citation>
    <scope>NUCLEOTIDE SEQUENCE [LARGE SCALE GENOMIC DNA]</scope>
    <source>
        <strain>ATCC BAA-491 / LMD-9</strain>
    </source>
</reference>
<protein>
    <recommendedName>
        <fullName evidence="1">Ribosomal RNA small subunit methyltransferase A</fullName>
        <ecNumber evidence="1">2.1.1.182</ecNumber>
    </recommendedName>
    <alternativeName>
        <fullName evidence="1">16S rRNA (adenine(1518)-N(6)/adenine(1519)-N(6))-dimethyltransferase</fullName>
    </alternativeName>
    <alternativeName>
        <fullName evidence="1">16S rRNA dimethyladenosine transferase</fullName>
    </alternativeName>
    <alternativeName>
        <fullName evidence="1">16S rRNA dimethylase</fullName>
    </alternativeName>
    <alternativeName>
        <fullName evidence="1">S-adenosylmethionine-6-N', N'-adenosyl(rRNA) dimethyltransferase</fullName>
    </alternativeName>
</protein>